<protein>
    <recommendedName>
        <fullName evidence="1">tRNA modification GTPase MnmE</fullName>
        <ecNumber evidence="1">3.6.-.-</ecNumber>
    </recommendedName>
</protein>
<dbReference type="EC" id="3.6.-.-" evidence="1"/>
<dbReference type="EMBL" id="CP000730">
    <property type="protein sequence ID" value="ABX30701.1"/>
    <property type="molecule type" value="Genomic_DNA"/>
</dbReference>
<dbReference type="RefSeq" id="WP_000362503.1">
    <property type="nucleotide sequence ID" value="NC_010079.1"/>
</dbReference>
<dbReference type="SMR" id="A8YYS1"/>
<dbReference type="KEGG" id="sax:USA300HOU_2715"/>
<dbReference type="HOGENOM" id="CLU_019624_4_1_9"/>
<dbReference type="GO" id="GO:0005829">
    <property type="term" value="C:cytosol"/>
    <property type="evidence" value="ECO:0007669"/>
    <property type="project" value="TreeGrafter"/>
</dbReference>
<dbReference type="GO" id="GO:0005525">
    <property type="term" value="F:GTP binding"/>
    <property type="evidence" value="ECO:0007669"/>
    <property type="project" value="UniProtKB-UniRule"/>
</dbReference>
<dbReference type="GO" id="GO:0003924">
    <property type="term" value="F:GTPase activity"/>
    <property type="evidence" value="ECO:0007669"/>
    <property type="project" value="UniProtKB-UniRule"/>
</dbReference>
<dbReference type="GO" id="GO:0046872">
    <property type="term" value="F:metal ion binding"/>
    <property type="evidence" value="ECO:0007669"/>
    <property type="project" value="UniProtKB-KW"/>
</dbReference>
<dbReference type="GO" id="GO:0030488">
    <property type="term" value="P:tRNA methylation"/>
    <property type="evidence" value="ECO:0007669"/>
    <property type="project" value="TreeGrafter"/>
</dbReference>
<dbReference type="GO" id="GO:0002098">
    <property type="term" value="P:tRNA wobble uridine modification"/>
    <property type="evidence" value="ECO:0007669"/>
    <property type="project" value="TreeGrafter"/>
</dbReference>
<dbReference type="CDD" id="cd04164">
    <property type="entry name" value="trmE"/>
    <property type="match status" value="1"/>
</dbReference>
<dbReference type="CDD" id="cd14858">
    <property type="entry name" value="TrmE_N"/>
    <property type="match status" value="1"/>
</dbReference>
<dbReference type="FunFam" id="3.30.1360.120:FF:000003">
    <property type="entry name" value="tRNA modification GTPase MnmE"/>
    <property type="match status" value="1"/>
</dbReference>
<dbReference type="FunFam" id="3.40.50.300:FF:000494">
    <property type="entry name" value="tRNA modification GTPase MnmE"/>
    <property type="match status" value="1"/>
</dbReference>
<dbReference type="Gene3D" id="3.40.50.300">
    <property type="entry name" value="P-loop containing nucleotide triphosphate hydrolases"/>
    <property type="match status" value="1"/>
</dbReference>
<dbReference type="Gene3D" id="3.30.1360.120">
    <property type="entry name" value="Probable tRNA modification gtpase trme, domain 1"/>
    <property type="match status" value="1"/>
</dbReference>
<dbReference type="Gene3D" id="1.20.120.430">
    <property type="entry name" value="tRNA modification GTPase MnmE domain 2"/>
    <property type="match status" value="1"/>
</dbReference>
<dbReference type="HAMAP" id="MF_00379">
    <property type="entry name" value="GTPase_MnmE"/>
    <property type="match status" value="1"/>
</dbReference>
<dbReference type="InterPro" id="IPR031168">
    <property type="entry name" value="G_TrmE"/>
</dbReference>
<dbReference type="InterPro" id="IPR006073">
    <property type="entry name" value="GTP-bd"/>
</dbReference>
<dbReference type="InterPro" id="IPR018948">
    <property type="entry name" value="GTP-bd_TrmE_N"/>
</dbReference>
<dbReference type="InterPro" id="IPR004520">
    <property type="entry name" value="GTPase_MnmE"/>
</dbReference>
<dbReference type="InterPro" id="IPR027368">
    <property type="entry name" value="MnmE_dom2"/>
</dbReference>
<dbReference type="InterPro" id="IPR025867">
    <property type="entry name" value="MnmE_helical"/>
</dbReference>
<dbReference type="InterPro" id="IPR027417">
    <property type="entry name" value="P-loop_NTPase"/>
</dbReference>
<dbReference type="InterPro" id="IPR005225">
    <property type="entry name" value="Small_GTP-bd"/>
</dbReference>
<dbReference type="InterPro" id="IPR027266">
    <property type="entry name" value="TrmE/GcvT_dom1"/>
</dbReference>
<dbReference type="NCBIfam" id="TIGR00450">
    <property type="entry name" value="mnmE_trmE_thdF"/>
    <property type="match status" value="1"/>
</dbReference>
<dbReference type="NCBIfam" id="NF003661">
    <property type="entry name" value="PRK05291.1-3"/>
    <property type="match status" value="1"/>
</dbReference>
<dbReference type="NCBIfam" id="TIGR00231">
    <property type="entry name" value="small_GTP"/>
    <property type="match status" value="1"/>
</dbReference>
<dbReference type="PANTHER" id="PTHR42714">
    <property type="entry name" value="TRNA MODIFICATION GTPASE GTPBP3"/>
    <property type="match status" value="1"/>
</dbReference>
<dbReference type="PANTHER" id="PTHR42714:SF2">
    <property type="entry name" value="TRNA MODIFICATION GTPASE GTPBP3, MITOCHONDRIAL"/>
    <property type="match status" value="1"/>
</dbReference>
<dbReference type="Pfam" id="PF01926">
    <property type="entry name" value="MMR_HSR1"/>
    <property type="match status" value="1"/>
</dbReference>
<dbReference type="Pfam" id="PF12631">
    <property type="entry name" value="MnmE_helical"/>
    <property type="match status" value="1"/>
</dbReference>
<dbReference type="Pfam" id="PF10396">
    <property type="entry name" value="TrmE_N"/>
    <property type="match status" value="1"/>
</dbReference>
<dbReference type="PRINTS" id="PR00449">
    <property type="entry name" value="RASTRNSFRMNG"/>
</dbReference>
<dbReference type="SUPFAM" id="SSF52540">
    <property type="entry name" value="P-loop containing nucleoside triphosphate hydrolases"/>
    <property type="match status" value="1"/>
</dbReference>
<dbReference type="SUPFAM" id="SSF116878">
    <property type="entry name" value="TrmE connector domain"/>
    <property type="match status" value="1"/>
</dbReference>
<dbReference type="PROSITE" id="PS51709">
    <property type="entry name" value="G_TRME"/>
    <property type="match status" value="1"/>
</dbReference>
<feature type="chain" id="PRO_1000080019" description="tRNA modification GTPase MnmE">
    <location>
        <begin position="1"/>
        <end position="459"/>
    </location>
</feature>
<feature type="domain" description="TrmE-type G">
    <location>
        <begin position="221"/>
        <end position="380"/>
    </location>
</feature>
<feature type="binding site" evidence="1">
    <location>
        <position position="22"/>
    </location>
    <ligand>
        <name>(6S)-5-formyl-5,6,7,8-tetrahydrofolate</name>
        <dbReference type="ChEBI" id="CHEBI:57457"/>
    </ligand>
</feature>
<feature type="binding site" evidence="1">
    <location>
        <position position="85"/>
    </location>
    <ligand>
        <name>(6S)-5-formyl-5,6,7,8-tetrahydrofolate</name>
        <dbReference type="ChEBI" id="CHEBI:57457"/>
    </ligand>
</feature>
<feature type="binding site" evidence="1">
    <location>
        <position position="124"/>
    </location>
    <ligand>
        <name>(6S)-5-formyl-5,6,7,8-tetrahydrofolate</name>
        <dbReference type="ChEBI" id="CHEBI:57457"/>
    </ligand>
</feature>
<feature type="binding site" evidence="1">
    <location>
        <begin position="231"/>
        <end position="236"/>
    </location>
    <ligand>
        <name>GTP</name>
        <dbReference type="ChEBI" id="CHEBI:37565"/>
    </ligand>
</feature>
<feature type="binding site" evidence="1">
    <location>
        <position position="231"/>
    </location>
    <ligand>
        <name>K(+)</name>
        <dbReference type="ChEBI" id="CHEBI:29103"/>
    </ligand>
</feature>
<feature type="binding site" evidence="1">
    <location>
        <position position="235"/>
    </location>
    <ligand>
        <name>Mg(2+)</name>
        <dbReference type="ChEBI" id="CHEBI:18420"/>
    </ligand>
</feature>
<feature type="binding site" evidence="1">
    <location>
        <begin position="250"/>
        <end position="256"/>
    </location>
    <ligand>
        <name>GTP</name>
        <dbReference type="ChEBI" id="CHEBI:37565"/>
    </ligand>
</feature>
<feature type="binding site" evidence="1">
    <location>
        <position position="250"/>
    </location>
    <ligand>
        <name>K(+)</name>
        <dbReference type="ChEBI" id="CHEBI:29103"/>
    </ligand>
</feature>
<feature type="binding site" evidence="1">
    <location>
        <position position="252"/>
    </location>
    <ligand>
        <name>K(+)</name>
        <dbReference type="ChEBI" id="CHEBI:29103"/>
    </ligand>
</feature>
<feature type="binding site" evidence="1">
    <location>
        <position position="255"/>
    </location>
    <ligand>
        <name>K(+)</name>
        <dbReference type="ChEBI" id="CHEBI:29103"/>
    </ligand>
</feature>
<feature type="binding site" evidence="1">
    <location>
        <position position="256"/>
    </location>
    <ligand>
        <name>Mg(2+)</name>
        <dbReference type="ChEBI" id="CHEBI:18420"/>
    </ligand>
</feature>
<feature type="binding site" evidence="1">
    <location>
        <begin position="275"/>
        <end position="278"/>
    </location>
    <ligand>
        <name>GTP</name>
        <dbReference type="ChEBI" id="CHEBI:37565"/>
    </ligand>
</feature>
<feature type="binding site" evidence="1">
    <location>
        <position position="459"/>
    </location>
    <ligand>
        <name>(6S)-5-formyl-5,6,7,8-tetrahydrofolate</name>
        <dbReference type="ChEBI" id="CHEBI:57457"/>
    </ligand>
</feature>
<name>MNME_STAAT</name>
<keyword id="KW-0963">Cytoplasm</keyword>
<keyword id="KW-0342">GTP-binding</keyword>
<keyword id="KW-0378">Hydrolase</keyword>
<keyword id="KW-0460">Magnesium</keyword>
<keyword id="KW-0479">Metal-binding</keyword>
<keyword id="KW-0547">Nucleotide-binding</keyword>
<keyword id="KW-0630">Potassium</keyword>
<keyword id="KW-0819">tRNA processing</keyword>
<accession>A8YYS1</accession>
<reference key="1">
    <citation type="journal article" date="2007" name="BMC Microbiol.">
        <title>Subtle genetic changes enhance virulence of methicillin resistant and sensitive Staphylococcus aureus.</title>
        <authorList>
            <person name="Highlander S.K."/>
            <person name="Hulten K.G."/>
            <person name="Qin X."/>
            <person name="Jiang H."/>
            <person name="Yerrapragada S."/>
            <person name="Mason E.O. Jr."/>
            <person name="Shang Y."/>
            <person name="Williams T.M."/>
            <person name="Fortunov R.M."/>
            <person name="Liu Y."/>
            <person name="Igboeli O."/>
            <person name="Petrosino J."/>
            <person name="Tirumalai M."/>
            <person name="Uzman A."/>
            <person name="Fox G.E."/>
            <person name="Cardenas A.M."/>
            <person name="Muzny D.M."/>
            <person name="Hemphill L."/>
            <person name="Ding Y."/>
            <person name="Dugan S."/>
            <person name="Blyth P.R."/>
            <person name="Buhay C.J."/>
            <person name="Dinh H.H."/>
            <person name="Hawes A.C."/>
            <person name="Holder M."/>
            <person name="Kovar C.L."/>
            <person name="Lee S.L."/>
            <person name="Liu W."/>
            <person name="Nazareth L.V."/>
            <person name="Wang Q."/>
            <person name="Zhou J."/>
            <person name="Kaplan S.L."/>
            <person name="Weinstock G.M."/>
        </authorList>
    </citation>
    <scope>NUCLEOTIDE SEQUENCE [LARGE SCALE GENOMIC DNA]</scope>
    <source>
        <strain>USA300 / TCH1516</strain>
    </source>
</reference>
<proteinExistence type="inferred from homology"/>
<sequence length="459" mass="51356">MDLDTITSISTPMGEGAIGIVRLSGPQAVEIADKLYKGKHLLNDVPSHTINYGHIIDPESKEVIEEVMVSVLRAPKTFTREDIIEINCHGGILTINRVLELTMTYGARMAEPGEFTKRAFLNGRIDLSQAEAVMDFIRSKTDRASKVAMNQIEGRLSDLIKKQRQSILEILAQVEVNIDYPEYDDVEDATTEFLLEQSKEIKQEINRLLDTGAQGKIMREGLSTVIVGKPNVGKSSMLNNLIQDNKAIVTEVAGTTRDVLEEYVNVRGVPLRLVDTAGIRETEDIVEKIGVERSRKALSQADLILFVLNNNEALTQEDYTLYEVVKNEDVIVIVNKMDLEQNIDINEVKDMIGDTPLIQTSMLKQEGIDELEIQIRDLFFGGEVQNQDMTYVSNSRHISLLKQARQTIQDAIDAAESGVPMDMVQIDLTRTWEILGEIIGETASDELIDQLFSQFCLGK</sequence>
<evidence type="ECO:0000255" key="1">
    <source>
        <dbReference type="HAMAP-Rule" id="MF_00379"/>
    </source>
</evidence>
<organism>
    <name type="scientific">Staphylococcus aureus (strain USA300 / TCH1516)</name>
    <dbReference type="NCBI Taxonomy" id="451516"/>
    <lineage>
        <taxon>Bacteria</taxon>
        <taxon>Bacillati</taxon>
        <taxon>Bacillota</taxon>
        <taxon>Bacilli</taxon>
        <taxon>Bacillales</taxon>
        <taxon>Staphylococcaceae</taxon>
        <taxon>Staphylococcus</taxon>
    </lineage>
</organism>
<comment type="function">
    <text evidence="1">Exhibits a very high intrinsic GTPase hydrolysis rate. Involved in the addition of a carboxymethylaminomethyl (cmnm) group at the wobble position (U34) of certain tRNAs, forming tRNA-cmnm(5)s(2)U34.</text>
</comment>
<comment type="cofactor">
    <cofactor evidence="1">
        <name>K(+)</name>
        <dbReference type="ChEBI" id="CHEBI:29103"/>
    </cofactor>
    <text evidence="1">Binds 1 potassium ion per subunit.</text>
</comment>
<comment type="subunit">
    <text evidence="1">Homodimer. Heterotetramer of two MnmE and two MnmG subunits.</text>
</comment>
<comment type="subcellular location">
    <subcellularLocation>
        <location evidence="1">Cytoplasm</location>
    </subcellularLocation>
</comment>
<comment type="similarity">
    <text evidence="1">Belongs to the TRAFAC class TrmE-Era-EngA-EngB-Septin-like GTPase superfamily. TrmE GTPase family.</text>
</comment>
<gene>
    <name evidence="1" type="primary">mnmE</name>
    <name evidence="1" type="synonym">trmE</name>
    <name type="ordered locus">USA300HOU_2715</name>
</gene>